<proteinExistence type="inferred from homology"/>
<protein>
    <recommendedName>
        <fullName evidence="1">Fructose-1,6-bisphosphatase class 1 1</fullName>
        <shortName evidence="1">FBPase class 1 1</shortName>
        <ecNumber evidence="1">3.1.3.11</ecNumber>
    </recommendedName>
    <alternativeName>
        <fullName evidence="1">D-fructose-1,6-bisphosphate 1-phosphohydrolase class 1 1</fullName>
    </alternativeName>
</protein>
<reference key="1">
    <citation type="journal article" date="2005" name="Proc. Natl. Acad. Sci. U.S.A.">
        <title>The genome of Salinibacter ruber: convergence and gene exchange among hyperhalophilic bacteria and archaea.</title>
        <authorList>
            <person name="Mongodin E.F."/>
            <person name="Nelson K.E."/>
            <person name="Daugherty S."/>
            <person name="DeBoy R.T."/>
            <person name="Wister J."/>
            <person name="Khouri H."/>
            <person name="Weidman J."/>
            <person name="Walsh D.A."/>
            <person name="Papke R.T."/>
            <person name="Sanchez Perez G."/>
            <person name="Sharma A.K."/>
            <person name="Nesbo C.L."/>
            <person name="MacLeod D."/>
            <person name="Bapteste E."/>
            <person name="Doolittle W.F."/>
            <person name="Charlebois R.L."/>
            <person name="Legault B."/>
            <person name="Rodriguez-Valera F."/>
        </authorList>
    </citation>
    <scope>NUCLEOTIDE SEQUENCE [LARGE SCALE GENOMIC DNA]</scope>
    <source>
        <strain>DSM 13855 / CECT 5946 / M31</strain>
    </source>
</reference>
<feature type="chain" id="PRO_0000364682" description="Fructose-1,6-bisphosphatase class 1 1">
    <location>
        <begin position="1"/>
        <end position="356"/>
    </location>
</feature>
<feature type="binding site" evidence="1">
    <location>
        <position position="106"/>
    </location>
    <ligand>
        <name>Mg(2+)</name>
        <dbReference type="ChEBI" id="CHEBI:18420"/>
        <label>1</label>
    </ligand>
</feature>
<feature type="binding site" evidence="1">
    <location>
        <position position="129"/>
    </location>
    <ligand>
        <name>Mg(2+)</name>
        <dbReference type="ChEBI" id="CHEBI:18420"/>
        <label>1</label>
    </ligand>
</feature>
<feature type="binding site" evidence="1">
    <location>
        <position position="129"/>
    </location>
    <ligand>
        <name>Mg(2+)</name>
        <dbReference type="ChEBI" id="CHEBI:18420"/>
        <label>2</label>
    </ligand>
</feature>
<feature type="binding site" evidence="1">
    <location>
        <position position="131"/>
    </location>
    <ligand>
        <name>Mg(2+)</name>
        <dbReference type="ChEBI" id="CHEBI:18420"/>
        <label>1</label>
    </ligand>
</feature>
<feature type="binding site" evidence="1">
    <location>
        <begin position="132"/>
        <end position="135"/>
    </location>
    <ligand>
        <name>substrate</name>
    </ligand>
</feature>
<feature type="binding site" evidence="1">
    <location>
        <position position="132"/>
    </location>
    <ligand>
        <name>Mg(2+)</name>
        <dbReference type="ChEBI" id="CHEBI:18420"/>
        <label>2</label>
    </ligand>
</feature>
<feature type="binding site" evidence="1">
    <location>
        <position position="225"/>
    </location>
    <ligand>
        <name>substrate</name>
    </ligand>
</feature>
<feature type="binding site" evidence="1">
    <location>
        <position position="258"/>
    </location>
    <ligand>
        <name>substrate</name>
    </ligand>
</feature>
<feature type="binding site" evidence="1">
    <location>
        <position position="288"/>
    </location>
    <ligand>
        <name>substrate</name>
    </ligand>
</feature>
<feature type="binding site" evidence="1">
    <location>
        <position position="294"/>
    </location>
    <ligand>
        <name>Mg(2+)</name>
        <dbReference type="ChEBI" id="CHEBI:18420"/>
        <label>2</label>
    </ligand>
</feature>
<name>F16A1_SALRD</name>
<keyword id="KW-0119">Carbohydrate metabolism</keyword>
<keyword id="KW-0963">Cytoplasm</keyword>
<keyword id="KW-0378">Hydrolase</keyword>
<keyword id="KW-0460">Magnesium</keyword>
<keyword id="KW-0479">Metal-binding</keyword>
<keyword id="KW-1185">Reference proteome</keyword>
<organism>
    <name type="scientific">Salinibacter ruber (strain DSM 13855 / M31)</name>
    <dbReference type="NCBI Taxonomy" id="309807"/>
    <lineage>
        <taxon>Bacteria</taxon>
        <taxon>Pseudomonadati</taxon>
        <taxon>Rhodothermota</taxon>
        <taxon>Rhodothermia</taxon>
        <taxon>Rhodothermales</taxon>
        <taxon>Salinibacteraceae</taxon>
        <taxon>Salinibacter</taxon>
    </lineage>
</organism>
<accession>Q2S2I3</accession>
<comment type="catalytic activity">
    <reaction evidence="1">
        <text>beta-D-fructose 1,6-bisphosphate + H2O = beta-D-fructose 6-phosphate + phosphate</text>
        <dbReference type="Rhea" id="RHEA:11064"/>
        <dbReference type="ChEBI" id="CHEBI:15377"/>
        <dbReference type="ChEBI" id="CHEBI:32966"/>
        <dbReference type="ChEBI" id="CHEBI:43474"/>
        <dbReference type="ChEBI" id="CHEBI:57634"/>
        <dbReference type="EC" id="3.1.3.11"/>
    </reaction>
</comment>
<comment type="cofactor">
    <cofactor evidence="1">
        <name>Mg(2+)</name>
        <dbReference type="ChEBI" id="CHEBI:18420"/>
    </cofactor>
    <text evidence="1">Binds 2 magnesium ions per subunit.</text>
</comment>
<comment type="pathway">
    <text evidence="1">Carbohydrate biosynthesis; gluconeogenesis.</text>
</comment>
<comment type="subunit">
    <text evidence="1">Homotetramer.</text>
</comment>
<comment type="subcellular location">
    <subcellularLocation>
        <location evidence="1">Cytoplasm</location>
    </subcellularLocation>
</comment>
<comment type="similarity">
    <text evidence="1">Belongs to the FBPase class 1 family.</text>
</comment>
<dbReference type="EC" id="3.1.3.11" evidence="1"/>
<dbReference type="EMBL" id="CP000159">
    <property type="protein sequence ID" value="ABC45463.1"/>
    <property type="molecule type" value="Genomic_DNA"/>
</dbReference>
<dbReference type="RefSeq" id="YP_445598.1">
    <property type="nucleotide sequence ID" value="NC_007677.1"/>
</dbReference>
<dbReference type="SMR" id="Q2S2I3"/>
<dbReference type="STRING" id="309807.SRU_1474"/>
<dbReference type="EnsemblBacteria" id="ABC45463">
    <property type="protein sequence ID" value="ABC45463"/>
    <property type="gene ID" value="SRU_1474"/>
</dbReference>
<dbReference type="KEGG" id="sru:SRU_1474"/>
<dbReference type="PATRIC" id="fig|309807.25.peg.1531"/>
<dbReference type="eggNOG" id="COG0158">
    <property type="taxonomic scope" value="Bacteria"/>
</dbReference>
<dbReference type="HOGENOM" id="CLU_039977_2_2_10"/>
<dbReference type="OrthoDB" id="9806756at2"/>
<dbReference type="UniPathway" id="UPA00138"/>
<dbReference type="Proteomes" id="UP000008674">
    <property type="component" value="Chromosome"/>
</dbReference>
<dbReference type="GO" id="GO:0005829">
    <property type="term" value="C:cytosol"/>
    <property type="evidence" value="ECO:0007669"/>
    <property type="project" value="TreeGrafter"/>
</dbReference>
<dbReference type="GO" id="GO:0042132">
    <property type="term" value="F:fructose 1,6-bisphosphate 1-phosphatase activity"/>
    <property type="evidence" value="ECO:0007669"/>
    <property type="project" value="UniProtKB-UniRule"/>
</dbReference>
<dbReference type="GO" id="GO:0000287">
    <property type="term" value="F:magnesium ion binding"/>
    <property type="evidence" value="ECO:0007669"/>
    <property type="project" value="UniProtKB-UniRule"/>
</dbReference>
<dbReference type="GO" id="GO:0030388">
    <property type="term" value="P:fructose 1,6-bisphosphate metabolic process"/>
    <property type="evidence" value="ECO:0007669"/>
    <property type="project" value="TreeGrafter"/>
</dbReference>
<dbReference type="GO" id="GO:0006002">
    <property type="term" value="P:fructose 6-phosphate metabolic process"/>
    <property type="evidence" value="ECO:0007669"/>
    <property type="project" value="TreeGrafter"/>
</dbReference>
<dbReference type="GO" id="GO:0006000">
    <property type="term" value="P:fructose metabolic process"/>
    <property type="evidence" value="ECO:0007669"/>
    <property type="project" value="TreeGrafter"/>
</dbReference>
<dbReference type="GO" id="GO:0006094">
    <property type="term" value="P:gluconeogenesis"/>
    <property type="evidence" value="ECO:0007669"/>
    <property type="project" value="UniProtKB-UniRule"/>
</dbReference>
<dbReference type="GO" id="GO:0005986">
    <property type="term" value="P:sucrose biosynthetic process"/>
    <property type="evidence" value="ECO:0007669"/>
    <property type="project" value="TreeGrafter"/>
</dbReference>
<dbReference type="CDD" id="cd00354">
    <property type="entry name" value="FBPase"/>
    <property type="match status" value="1"/>
</dbReference>
<dbReference type="FunFam" id="3.30.540.10:FF:000002">
    <property type="entry name" value="Fructose-1,6-bisphosphatase class 1"/>
    <property type="match status" value="1"/>
</dbReference>
<dbReference type="Gene3D" id="3.40.190.80">
    <property type="match status" value="1"/>
</dbReference>
<dbReference type="Gene3D" id="3.30.540.10">
    <property type="entry name" value="Fructose-1,6-Bisphosphatase, subunit A, domain 1"/>
    <property type="match status" value="1"/>
</dbReference>
<dbReference type="HAMAP" id="MF_01855">
    <property type="entry name" value="FBPase_class1"/>
    <property type="match status" value="1"/>
</dbReference>
<dbReference type="InterPro" id="IPR044015">
    <property type="entry name" value="FBPase_C_dom"/>
</dbReference>
<dbReference type="InterPro" id="IPR000146">
    <property type="entry name" value="FBPase_class-1"/>
</dbReference>
<dbReference type="InterPro" id="IPR033391">
    <property type="entry name" value="FBPase_N"/>
</dbReference>
<dbReference type="InterPro" id="IPR028343">
    <property type="entry name" value="FBPtase"/>
</dbReference>
<dbReference type="NCBIfam" id="NF006778">
    <property type="entry name" value="PRK09293.1-1"/>
    <property type="match status" value="1"/>
</dbReference>
<dbReference type="PANTHER" id="PTHR11556">
    <property type="entry name" value="FRUCTOSE-1,6-BISPHOSPHATASE-RELATED"/>
    <property type="match status" value="1"/>
</dbReference>
<dbReference type="PANTHER" id="PTHR11556:SF35">
    <property type="entry name" value="SEDOHEPTULOSE-1,7-BISPHOSPHATASE, CHLOROPLASTIC"/>
    <property type="match status" value="1"/>
</dbReference>
<dbReference type="Pfam" id="PF00316">
    <property type="entry name" value="FBPase"/>
    <property type="match status" value="1"/>
</dbReference>
<dbReference type="Pfam" id="PF18913">
    <property type="entry name" value="FBPase_C"/>
    <property type="match status" value="1"/>
</dbReference>
<dbReference type="PIRSF" id="PIRSF500210">
    <property type="entry name" value="FBPtase"/>
    <property type="match status" value="1"/>
</dbReference>
<dbReference type="PIRSF" id="PIRSF000904">
    <property type="entry name" value="FBPtase_SBPase"/>
    <property type="match status" value="1"/>
</dbReference>
<dbReference type="PRINTS" id="PR00115">
    <property type="entry name" value="F16BPHPHTASE"/>
</dbReference>
<dbReference type="SUPFAM" id="SSF56655">
    <property type="entry name" value="Carbohydrate phosphatase"/>
    <property type="match status" value="1"/>
</dbReference>
<gene>
    <name evidence="1" type="primary">fbp1</name>
    <name type="ordered locus">SRU_1474</name>
</gene>
<sequence length="356" mass="38538">MSHALSDGPAPSGALESVMTLEQFILDRRGRFPQSTGAFSRLLRDVSVAAKIINHNIRRAGILDVMGESGTVNVQDEKQKKLDEIADRELERALRRGGECCLVGSEEQADTISLSPRGDFQERFAVFFDPLDGSSNTDVNASVGTIFSVYTLPEGADEGDALDVALRPGAEQVAAGYVAYGSSTMFVFTTGNGVNGFTLDPGIGEFLLTHPDLQIPQAPAMYSINEADIEDFSPELRAFLQWLKTKDPDTGHRIRARYIGSFVSDFHRNLLTGGLYMYPATSDHPDGKLRLMYEANPMAFLVEQAGGRASTGHQRILDLQPEGLHERTPLFIGSAPLVKAAEAYLQGRGAEAVGGA</sequence>
<evidence type="ECO:0000255" key="1">
    <source>
        <dbReference type="HAMAP-Rule" id="MF_01855"/>
    </source>
</evidence>